<sequence length="331" mass="37519">MGPAPESSEFVHRTWVQCENESCLKWRLLSPAAAAAVNPSEPWYCFMNTDPSYSSCSVSEEDFPEESQFLENGYKFVYSQLPLGSLVLVKLRNWPSWPGILCPDPFKGKYVTYDQDGNVEKYYVEFLGDPHSTAWMSAAFVGHFSLTLEAADCTKKKRWYRSALEEAYQLYRCSAEQRLEVCCLSKPNRAKTDTKAAVVTKKGMQVSKINTEKKRPRVRKRKRDAALKCSVEIFCSDEALSKENMVVSETEGLLKELEKMLQQIQEPTAREDESQGEQLSQCSPESPTGSPFQSYHEEDYIVPDGAGLKAGEYIEIITNNLKKIDALISEF</sequence>
<reference key="1">
    <citation type="journal article" date="2009" name="PLoS Biol.">
        <title>Lineage-specific biology revealed by a finished genome assembly of the mouse.</title>
        <authorList>
            <person name="Church D.M."/>
            <person name="Goodstadt L."/>
            <person name="Hillier L.W."/>
            <person name="Zody M.C."/>
            <person name="Goldstein S."/>
            <person name="She X."/>
            <person name="Bult C.J."/>
            <person name="Agarwala R."/>
            <person name="Cherry J.L."/>
            <person name="DiCuccio M."/>
            <person name="Hlavina W."/>
            <person name="Kapustin Y."/>
            <person name="Meric P."/>
            <person name="Maglott D."/>
            <person name="Birtle Z."/>
            <person name="Marques A.C."/>
            <person name="Graves T."/>
            <person name="Zhou S."/>
            <person name="Teague B."/>
            <person name="Potamousis K."/>
            <person name="Churas C."/>
            <person name="Place M."/>
            <person name="Herschleb J."/>
            <person name="Runnheim R."/>
            <person name="Forrest D."/>
            <person name="Amos-Landgraf J."/>
            <person name="Schwartz D.C."/>
            <person name="Cheng Z."/>
            <person name="Lindblad-Toh K."/>
            <person name="Eichler E.E."/>
            <person name="Ponting C.P."/>
        </authorList>
    </citation>
    <scope>NUCLEOTIDE SEQUENCE [LARGE SCALE GENOMIC DNA]</scope>
    <source>
        <strain>C57BL/6J</strain>
    </source>
</reference>
<reference key="2">
    <citation type="journal article" date="2004" name="Genome Res.">
        <title>The status, quality, and expansion of the NIH full-length cDNA project: the Mammalian Gene Collection (MGC).</title>
        <authorList>
            <consortium name="The MGC Project Team"/>
        </authorList>
    </citation>
    <scope>NUCLEOTIDE SEQUENCE [LARGE SCALE MRNA] (ISOFORM 2)</scope>
</reference>
<dbReference type="EMBL" id="AC157475">
    <property type="status" value="NOT_ANNOTATED_CDS"/>
    <property type="molecule type" value="Genomic_DNA"/>
</dbReference>
<dbReference type="EMBL" id="AC165253">
    <property type="status" value="NOT_ANNOTATED_CDS"/>
    <property type="molecule type" value="Genomic_DNA"/>
</dbReference>
<dbReference type="EMBL" id="BC104378">
    <property type="protein sequence ID" value="AAI04379.1"/>
    <property type="molecule type" value="mRNA"/>
</dbReference>
<dbReference type="RefSeq" id="NP_001365395.1">
    <molecule id="Q08EN7-1"/>
    <property type="nucleotide sequence ID" value="NM_001378466.1"/>
</dbReference>
<dbReference type="SMR" id="Q08EN7"/>
<dbReference type="FunCoup" id="Q08EN7">
    <property type="interactions" value="726"/>
</dbReference>
<dbReference type="STRING" id="10090.ENSMUSP00000158867"/>
<dbReference type="ProteomicsDB" id="302119">
    <molecule id="Q08EN7-1"/>
</dbReference>
<dbReference type="Ensembl" id="ENSMUST00000187803.3">
    <molecule id="Q08EN7-2"/>
    <property type="protein sequence ID" value="ENSMUSP00000159064.2"/>
    <property type="gene ID" value="ENSMUSG00000032443.18"/>
</dbReference>
<dbReference type="Ensembl" id="ENSMUST00000191100.2">
    <molecule id="Q08EN7-2"/>
    <property type="protein sequence ID" value="ENSMUSP00000159110.2"/>
    <property type="gene ID" value="ENSMUSG00000032443.18"/>
</dbReference>
<dbReference type="Ensembl" id="ENSMUST00000238919.2">
    <molecule id="Q08EN7-1"/>
    <property type="protein sequence ID" value="ENSMUSP00000158867.2"/>
    <property type="gene ID" value="ENSMUSG00000032443.18"/>
</dbReference>
<dbReference type="GeneID" id="100039681"/>
<dbReference type="AGR" id="MGI:1921888"/>
<dbReference type="MGI" id="MGI:1921888">
    <property type="gene designation" value="Zcwpw2"/>
</dbReference>
<dbReference type="VEuPathDB" id="HostDB:ENSMUSG00000032443"/>
<dbReference type="GeneTree" id="ENSGT00560000077278"/>
<dbReference type="InParanoid" id="Q08EN7"/>
<dbReference type="OMA" id="HSRSWID"/>
<dbReference type="OrthoDB" id="757982at2759"/>
<dbReference type="PhylomeDB" id="Q08EN7"/>
<dbReference type="PRO" id="PR:Q08EN7"/>
<dbReference type="Proteomes" id="UP000000589">
    <property type="component" value="Chromosome 9"/>
</dbReference>
<dbReference type="RNAct" id="Q08EN7">
    <property type="molecule type" value="protein"/>
</dbReference>
<dbReference type="Bgee" id="ENSMUSG00000032443">
    <property type="expression patterns" value="Expressed in spermatid and 37 other cell types or tissues"/>
</dbReference>
<dbReference type="ExpressionAtlas" id="Q08EN7">
    <property type="expression patterns" value="baseline and differential"/>
</dbReference>
<dbReference type="GO" id="GO:0140002">
    <property type="term" value="F:histone H3K4me3 reader activity"/>
    <property type="evidence" value="ECO:0000250"/>
    <property type="project" value="UniProtKB"/>
</dbReference>
<dbReference type="GO" id="GO:0035064">
    <property type="term" value="F:methylated histone binding"/>
    <property type="evidence" value="ECO:0007669"/>
    <property type="project" value="Ensembl"/>
</dbReference>
<dbReference type="GO" id="GO:0008270">
    <property type="term" value="F:zinc ion binding"/>
    <property type="evidence" value="ECO:0007669"/>
    <property type="project" value="UniProtKB-KW"/>
</dbReference>
<dbReference type="CDD" id="cd20146">
    <property type="entry name" value="PWWP_ZCWPW2"/>
    <property type="match status" value="1"/>
</dbReference>
<dbReference type="Gene3D" id="2.30.30.140">
    <property type="match status" value="1"/>
</dbReference>
<dbReference type="Gene3D" id="3.30.40.100">
    <property type="match status" value="1"/>
</dbReference>
<dbReference type="InterPro" id="IPR000313">
    <property type="entry name" value="PWWP_dom"/>
</dbReference>
<dbReference type="InterPro" id="IPR042778">
    <property type="entry name" value="ZCWPW1/ZCWPW2"/>
</dbReference>
<dbReference type="InterPro" id="IPR011124">
    <property type="entry name" value="Znf_CW"/>
</dbReference>
<dbReference type="PANTHER" id="PTHR15999">
    <property type="entry name" value="ZINC FINGER CW-TYPE PWWP DOMAIN PROTEIN 1"/>
    <property type="match status" value="1"/>
</dbReference>
<dbReference type="PANTHER" id="PTHR15999:SF6">
    <property type="entry name" value="ZINC FINGER CW-TYPE PWWP DOMAIN PROTEIN 2"/>
    <property type="match status" value="1"/>
</dbReference>
<dbReference type="Pfam" id="PF00855">
    <property type="entry name" value="PWWP"/>
    <property type="match status" value="1"/>
</dbReference>
<dbReference type="Pfam" id="PF07496">
    <property type="entry name" value="zf-CW"/>
    <property type="match status" value="1"/>
</dbReference>
<dbReference type="SUPFAM" id="SSF63748">
    <property type="entry name" value="Tudor/PWWP/MBT"/>
    <property type="match status" value="1"/>
</dbReference>
<dbReference type="PROSITE" id="PS50812">
    <property type="entry name" value="PWWP"/>
    <property type="match status" value="1"/>
</dbReference>
<dbReference type="PROSITE" id="PS51050">
    <property type="entry name" value="ZF_CW"/>
    <property type="match status" value="1"/>
</dbReference>
<evidence type="ECO:0000250" key="1">
    <source>
        <dbReference type="UniProtKB" id="Q504Y3"/>
    </source>
</evidence>
<evidence type="ECO:0000255" key="2">
    <source>
        <dbReference type="PROSITE-ProRule" id="PRU00162"/>
    </source>
</evidence>
<evidence type="ECO:0000255" key="3">
    <source>
        <dbReference type="PROSITE-ProRule" id="PRU00454"/>
    </source>
</evidence>
<evidence type="ECO:0000256" key="4">
    <source>
        <dbReference type="SAM" id="MobiDB-lite"/>
    </source>
</evidence>
<evidence type="ECO:0000303" key="5">
    <source>
    </source>
</evidence>
<organism>
    <name type="scientific">Mus musculus</name>
    <name type="common">Mouse</name>
    <dbReference type="NCBI Taxonomy" id="10090"/>
    <lineage>
        <taxon>Eukaryota</taxon>
        <taxon>Metazoa</taxon>
        <taxon>Chordata</taxon>
        <taxon>Craniata</taxon>
        <taxon>Vertebrata</taxon>
        <taxon>Euteleostomi</taxon>
        <taxon>Mammalia</taxon>
        <taxon>Eutheria</taxon>
        <taxon>Euarchontoglires</taxon>
        <taxon>Glires</taxon>
        <taxon>Rodentia</taxon>
        <taxon>Myomorpha</taxon>
        <taxon>Muroidea</taxon>
        <taxon>Muridae</taxon>
        <taxon>Murinae</taxon>
        <taxon>Mus</taxon>
        <taxon>Mus</taxon>
    </lineage>
</organism>
<comment type="function">
    <text evidence="1">Histone methylation reader which binds to non-methylated (H3K4me0), monomethylated (H3K4me1), dimethylated (H3K4me2) and trimethylated (H3K4me3) 'Lys-4' on histone H3 (By similarity). The order of binding preference is H3K4me3 &gt; H3K4me2 &gt; H3K4me1 &gt; H3K4me0 (By similarity).</text>
</comment>
<comment type="alternative products">
    <event type="alternative splicing"/>
    <isoform>
        <id>Q08EN7-1</id>
        <name>1</name>
        <sequence type="displayed"/>
    </isoform>
    <isoform>
        <id>Q08EN7-2</id>
        <name>2</name>
        <sequence type="described" ref="VSP_060790 VSP_060791"/>
    </isoform>
</comment>
<comment type="domain">
    <text evidence="1">The CW-TYPE zinc finger mediates its binding to trimethylated histone H3K4me3.</text>
</comment>
<keyword id="KW-0025">Alternative splicing</keyword>
<keyword id="KW-0479">Metal-binding</keyword>
<keyword id="KW-1185">Reference proteome</keyword>
<keyword id="KW-0862">Zinc</keyword>
<keyword id="KW-0863">Zinc-finger</keyword>
<gene>
    <name type="primary">Zcwpw2</name>
</gene>
<name>ZCPW2_MOUSE</name>
<proteinExistence type="evidence at transcript level"/>
<protein>
    <recommendedName>
        <fullName>Zinc finger CW-type PWWP domain protein 2 homolog</fullName>
    </recommendedName>
</protein>
<feature type="chain" id="PRO_0000415849" description="Zinc finger CW-type PWWP domain protein 2 homolog">
    <location>
        <begin position="1"/>
        <end position="331"/>
    </location>
</feature>
<feature type="domain" description="PWWP" evidence="2">
    <location>
        <begin position="83"/>
        <end position="147"/>
    </location>
</feature>
<feature type="zinc finger region" description="CW-type" evidence="3">
    <location>
        <begin position="9"/>
        <end position="64"/>
    </location>
</feature>
<feature type="region of interest" description="Disordered" evidence="4">
    <location>
        <begin position="264"/>
        <end position="295"/>
    </location>
</feature>
<feature type="compositionally biased region" description="Polar residues" evidence="4">
    <location>
        <begin position="276"/>
        <end position="293"/>
    </location>
</feature>
<feature type="binding site" evidence="3">
    <location>
        <position position="18"/>
    </location>
    <ligand>
        <name>Zn(2+)</name>
        <dbReference type="ChEBI" id="CHEBI:29105"/>
    </ligand>
</feature>
<feature type="binding site" evidence="3">
    <location>
        <position position="23"/>
    </location>
    <ligand>
        <name>Zn(2+)</name>
        <dbReference type="ChEBI" id="CHEBI:29105"/>
    </ligand>
</feature>
<feature type="binding site" evidence="3">
    <location>
        <position position="45"/>
    </location>
    <ligand>
        <name>Zn(2+)</name>
        <dbReference type="ChEBI" id="CHEBI:29105"/>
    </ligand>
</feature>
<feature type="binding site" evidence="3">
    <location>
        <position position="56"/>
    </location>
    <ligand>
        <name>Zn(2+)</name>
        <dbReference type="ChEBI" id="CHEBI:29105"/>
    </ligand>
</feature>
<feature type="splice variant" id="VSP_060790" description="In isoform 2." evidence="5">
    <original>SWPGILCPDPFKGKYVTYDQDGNVEKYYVE</original>
    <variation>RQQTVRRRRGGIEVPSRKHTNSTGVPQSKD</variation>
    <location>
        <begin position="96"/>
        <end position="125"/>
    </location>
</feature>
<feature type="splice variant" id="VSP_060791" description="In isoform 2." evidence="5">
    <location>
        <begin position="126"/>
        <end position="331"/>
    </location>
</feature>
<accession>Q08EN7</accession>
<accession>A0A5F8MP94</accession>